<dbReference type="EC" id="3.5.1.5" evidence="1"/>
<dbReference type="EMBL" id="AM260479">
    <property type="protein sequence ID" value="CAJ92225.1"/>
    <property type="molecule type" value="Genomic_DNA"/>
</dbReference>
<dbReference type="SMR" id="Q0KCP6"/>
<dbReference type="STRING" id="381666.H16_A1084"/>
<dbReference type="MEROPS" id="M38.982"/>
<dbReference type="KEGG" id="reh:H16_A1084"/>
<dbReference type="PATRIC" id="fig|381666.6.peg.1468"/>
<dbReference type="eggNOG" id="COG0804">
    <property type="taxonomic scope" value="Bacteria"/>
</dbReference>
<dbReference type="HOGENOM" id="CLU_000980_0_0_4"/>
<dbReference type="OrthoDB" id="9802793at2"/>
<dbReference type="UniPathway" id="UPA00258">
    <property type="reaction ID" value="UER00370"/>
</dbReference>
<dbReference type="Proteomes" id="UP000008210">
    <property type="component" value="Chromosome 1"/>
</dbReference>
<dbReference type="GO" id="GO:0005737">
    <property type="term" value="C:cytoplasm"/>
    <property type="evidence" value="ECO:0007669"/>
    <property type="project" value="UniProtKB-SubCell"/>
</dbReference>
<dbReference type="GO" id="GO:0016151">
    <property type="term" value="F:nickel cation binding"/>
    <property type="evidence" value="ECO:0007669"/>
    <property type="project" value="UniProtKB-UniRule"/>
</dbReference>
<dbReference type="GO" id="GO:0009039">
    <property type="term" value="F:urease activity"/>
    <property type="evidence" value="ECO:0007669"/>
    <property type="project" value="UniProtKB-UniRule"/>
</dbReference>
<dbReference type="GO" id="GO:0043419">
    <property type="term" value="P:urea catabolic process"/>
    <property type="evidence" value="ECO:0007669"/>
    <property type="project" value="UniProtKB-UniRule"/>
</dbReference>
<dbReference type="CDD" id="cd00375">
    <property type="entry name" value="Urease_alpha"/>
    <property type="match status" value="1"/>
</dbReference>
<dbReference type="Gene3D" id="3.20.20.140">
    <property type="entry name" value="Metal-dependent hydrolases"/>
    <property type="match status" value="1"/>
</dbReference>
<dbReference type="Gene3D" id="2.30.40.10">
    <property type="entry name" value="Urease, subunit C, domain 1"/>
    <property type="match status" value="1"/>
</dbReference>
<dbReference type="HAMAP" id="MF_01953">
    <property type="entry name" value="Urease_alpha"/>
    <property type="match status" value="1"/>
</dbReference>
<dbReference type="InterPro" id="IPR006680">
    <property type="entry name" value="Amidohydro-rel"/>
</dbReference>
<dbReference type="InterPro" id="IPR011059">
    <property type="entry name" value="Metal-dep_hydrolase_composite"/>
</dbReference>
<dbReference type="InterPro" id="IPR032466">
    <property type="entry name" value="Metal_Hydrolase"/>
</dbReference>
<dbReference type="InterPro" id="IPR011612">
    <property type="entry name" value="Urease_alpha_N_dom"/>
</dbReference>
<dbReference type="InterPro" id="IPR050112">
    <property type="entry name" value="Urease_alpha_subunit"/>
</dbReference>
<dbReference type="InterPro" id="IPR017950">
    <property type="entry name" value="Urease_AS"/>
</dbReference>
<dbReference type="InterPro" id="IPR005848">
    <property type="entry name" value="Urease_asu"/>
</dbReference>
<dbReference type="InterPro" id="IPR017951">
    <property type="entry name" value="Urease_asu_c"/>
</dbReference>
<dbReference type="InterPro" id="IPR029754">
    <property type="entry name" value="Urease_Ni-bd"/>
</dbReference>
<dbReference type="NCBIfam" id="NF009685">
    <property type="entry name" value="PRK13206.1"/>
    <property type="match status" value="1"/>
</dbReference>
<dbReference type="NCBIfam" id="NF009686">
    <property type="entry name" value="PRK13207.1"/>
    <property type="match status" value="1"/>
</dbReference>
<dbReference type="NCBIfam" id="TIGR01792">
    <property type="entry name" value="urease_alph"/>
    <property type="match status" value="1"/>
</dbReference>
<dbReference type="PANTHER" id="PTHR43440">
    <property type="entry name" value="UREASE"/>
    <property type="match status" value="1"/>
</dbReference>
<dbReference type="PANTHER" id="PTHR43440:SF1">
    <property type="entry name" value="UREASE"/>
    <property type="match status" value="1"/>
</dbReference>
<dbReference type="Pfam" id="PF01979">
    <property type="entry name" value="Amidohydro_1"/>
    <property type="match status" value="1"/>
</dbReference>
<dbReference type="Pfam" id="PF00449">
    <property type="entry name" value="Urease_alpha"/>
    <property type="match status" value="1"/>
</dbReference>
<dbReference type="PRINTS" id="PR01752">
    <property type="entry name" value="UREASE"/>
</dbReference>
<dbReference type="SUPFAM" id="SSF51338">
    <property type="entry name" value="Composite domain of metallo-dependent hydrolases"/>
    <property type="match status" value="2"/>
</dbReference>
<dbReference type="SUPFAM" id="SSF51556">
    <property type="entry name" value="Metallo-dependent hydrolases"/>
    <property type="match status" value="1"/>
</dbReference>
<dbReference type="PROSITE" id="PS01120">
    <property type="entry name" value="UREASE_1"/>
    <property type="match status" value="1"/>
</dbReference>
<dbReference type="PROSITE" id="PS00145">
    <property type="entry name" value="UREASE_2"/>
    <property type="match status" value="1"/>
</dbReference>
<dbReference type="PROSITE" id="PS51368">
    <property type="entry name" value="UREASE_3"/>
    <property type="match status" value="1"/>
</dbReference>
<name>URE1_CUPNH</name>
<protein>
    <recommendedName>
        <fullName evidence="1">Urease subunit alpha</fullName>
        <ecNumber evidence="1">3.5.1.5</ecNumber>
    </recommendedName>
    <alternativeName>
        <fullName evidence="1">Urea amidohydrolase subunit alpha</fullName>
    </alternativeName>
</protein>
<proteinExistence type="inferred from homology"/>
<sequence length="571" mass="60790">MAKISRQAYAEMFGPTTGDRLRLADTGLIIEIEKDFTIYGEEVKFGGGKVIRDGMGQSQRMASDCVDTVITNALIVDHWGIVKADIGLKGGRIAAIGKAGNPDIQPGVTIVVGPGTEVIAGEGMIVTAGGIDSHIHFICPQQIEEALMSGVTTMIGGGTGPATGTFATTVTPGPWYMERMLQAADAYPMNIGLLGKGNASQQGPLLEQVEAGAIGLKLHEDWGTTPAAIDTCLSVADATDTQVAIHTDTLNEAGFVEATIAAFKGRTIHTYHTEGAGGGHAPDIIKVCGEANVLPSSTNPTRPYTVNTLDEHLDMLMVCHHLDPSIAEDIAFAESRIRRETIAAEDILHDLGAFSMISSDSQAMGRVGEVIIRTWQTAHKMALQRGKLPGDPNDARGGHDNFRVKRYVAKYTINPALTHGIAHEVGSVEVGKWADLVLWRPAFFGVKPSLILKGGMIAAAAMGDPNASIPTPQPVHYRPMFASAGGALHRSSLTFVSQAALAAGIGERYGLAKTLSAVRGTRTVSKRDMVHNDWQPHVTVDPETYQVVADGQLLTCEPATELPMAQRYFLF</sequence>
<organism>
    <name type="scientific">Cupriavidus necator (strain ATCC 17699 / DSM 428 / KCTC 22496 / NCIMB 10442 / H16 / Stanier 337)</name>
    <name type="common">Ralstonia eutropha</name>
    <dbReference type="NCBI Taxonomy" id="381666"/>
    <lineage>
        <taxon>Bacteria</taxon>
        <taxon>Pseudomonadati</taxon>
        <taxon>Pseudomonadota</taxon>
        <taxon>Betaproteobacteria</taxon>
        <taxon>Burkholderiales</taxon>
        <taxon>Burkholderiaceae</taxon>
        <taxon>Cupriavidus</taxon>
    </lineage>
</organism>
<gene>
    <name evidence="1" type="primary">ureC</name>
    <name type="ordered locus">H16_A1084</name>
</gene>
<comment type="catalytic activity">
    <reaction evidence="1">
        <text>urea + 2 H2O + H(+) = hydrogencarbonate + 2 NH4(+)</text>
        <dbReference type="Rhea" id="RHEA:20557"/>
        <dbReference type="ChEBI" id="CHEBI:15377"/>
        <dbReference type="ChEBI" id="CHEBI:15378"/>
        <dbReference type="ChEBI" id="CHEBI:16199"/>
        <dbReference type="ChEBI" id="CHEBI:17544"/>
        <dbReference type="ChEBI" id="CHEBI:28938"/>
        <dbReference type="EC" id="3.5.1.5"/>
    </reaction>
</comment>
<comment type="cofactor">
    <cofactor evidence="1">
        <name>Ni cation</name>
        <dbReference type="ChEBI" id="CHEBI:25516"/>
    </cofactor>
    <text evidence="1">Binds 2 nickel ions per subunit.</text>
</comment>
<comment type="pathway">
    <text evidence="1">Nitrogen metabolism; urea degradation; CO(2) and NH(3) from urea (urease route): step 1/1.</text>
</comment>
<comment type="subunit">
    <text evidence="1">Heterotrimer of UreA (gamma), UreB (beta) and UreC (alpha) subunits. Three heterotrimers associate to form the active enzyme.</text>
</comment>
<comment type="subcellular location">
    <subcellularLocation>
        <location evidence="1">Cytoplasm</location>
    </subcellularLocation>
</comment>
<comment type="PTM">
    <text evidence="1">Carboxylation allows a single lysine to coordinate two nickel ions.</text>
</comment>
<comment type="similarity">
    <text evidence="1">Belongs to the metallo-dependent hydrolases superfamily. Urease alpha subunit family.</text>
</comment>
<reference key="1">
    <citation type="journal article" date="2006" name="Nat. Biotechnol.">
        <title>Genome sequence of the bioplastic-producing 'Knallgas' bacterium Ralstonia eutropha H16.</title>
        <authorList>
            <person name="Pohlmann A."/>
            <person name="Fricke W.F."/>
            <person name="Reinecke F."/>
            <person name="Kusian B."/>
            <person name="Liesegang H."/>
            <person name="Cramm R."/>
            <person name="Eitinger T."/>
            <person name="Ewering C."/>
            <person name="Poetter M."/>
            <person name="Schwartz E."/>
            <person name="Strittmatter A."/>
            <person name="Voss I."/>
            <person name="Gottschalk G."/>
            <person name="Steinbuechel A."/>
            <person name="Friedrich B."/>
            <person name="Bowien B."/>
        </authorList>
    </citation>
    <scope>NUCLEOTIDE SEQUENCE [LARGE SCALE GENOMIC DNA]</scope>
    <source>
        <strain>ATCC 17699 / DSM 428 / KCTC 22496 / NCIMB 10442 / H16 / Stanier 337</strain>
    </source>
</reference>
<keyword id="KW-0963">Cytoplasm</keyword>
<keyword id="KW-0378">Hydrolase</keyword>
<keyword id="KW-0479">Metal-binding</keyword>
<keyword id="KW-0533">Nickel</keyword>
<keyword id="KW-1185">Reference proteome</keyword>
<feature type="chain" id="PRO_1000070687" description="Urease subunit alpha">
    <location>
        <begin position="1"/>
        <end position="571"/>
    </location>
</feature>
<feature type="domain" description="Urease" evidence="1">
    <location>
        <begin position="129"/>
        <end position="571"/>
    </location>
</feature>
<feature type="active site" description="Proton donor" evidence="1">
    <location>
        <position position="320"/>
    </location>
</feature>
<feature type="binding site" evidence="1">
    <location>
        <position position="134"/>
    </location>
    <ligand>
        <name>Ni(2+)</name>
        <dbReference type="ChEBI" id="CHEBI:49786"/>
        <label>1</label>
    </ligand>
</feature>
<feature type="binding site" evidence="1">
    <location>
        <position position="136"/>
    </location>
    <ligand>
        <name>Ni(2+)</name>
        <dbReference type="ChEBI" id="CHEBI:49786"/>
        <label>1</label>
    </ligand>
</feature>
<feature type="binding site" description="via carbamate group" evidence="1">
    <location>
        <position position="217"/>
    </location>
    <ligand>
        <name>Ni(2+)</name>
        <dbReference type="ChEBI" id="CHEBI:49786"/>
        <label>1</label>
    </ligand>
</feature>
<feature type="binding site" description="via carbamate group" evidence="1">
    <location>
        <position position="217"/>
    </location>
    <ligand>
        <name>Ni(2+)</name>
        <dbReference type="ChEBI" id="CHEBI:49786"/>
        <label>2</label>
    </ligand>
</feature>
<feature type="binding site" evidence="1">
    <location>
        <position position="219"/>
    </location>
    <ligand>
        <name>substrate</name>
    </ligand>
</feature>
<feature type="binding site" evidence="1">
    <location>
        <position position="246"/>
    </location>
    <ligand>
        <name>Ni(2+)</name>
        <dbReference type="ChEBI" id="CHEBI:49786"/>
        <label>2</label>
    </ligand>
</feature>
<feature type="binding site" evidence="1">
    <location>
        <position position="272"/>
    </location>
    <ligand>
        <name>Ni(2+)</name>
        <dbReference type="ChEBI" id="CHEBI:49786"/>
        <label>2</label>
    </ligand>
</feature>
<feature type="binding site" evidence="1">
    <location>
        <position position="360"/>
    </location>
    <ligand>
        <name>Ni(2+)</name>
        <dbReference type="ChEBI" id="CHEBI:49786"/>
        <label>1</label>
    </ligand>
</feature>
<feature type="modified residue" description="N6-carboxylysine" evidence="1">
    <location>
        <position position="217"/>
    </location>
</feature>
<accession>Q0KCP6</accession>
<evidence type="ECO:0000255" key="1">
    <source>
        <dbReference type="HAMAP-Rule" id="MF_01953"/>
    </source>
</evidence>